<feature type="chain" id="PRO_0000164925" description="ATP-dependent DNA helicase dda">
    <location>
        <begin position="1"/>
        <end position="439"/>
    </location>
</feature>
<feature type="binding site" evidence="1">
    <location>
        <begin position="32"/>
        <end position="39"/>
    </location>
    <ligand>
        <name>ATP</name>
        <dbReference type="ChEBI" id="CHEBI:30616"/>
    </ligand>
</feature>
<feature type="sequence conflict" description="In Ref. 1; AAA32488." evidence="7" ref="1">
    <original>G</original>
    <variation>E</variation>
    <location>
        <position position="54"/>
    </location>
</feature>
<feature type="sequence conflict" description="In Ref. 1; AAA32488." evidence="7" ref="1">
    <original>E</original>
    <variation>D</variation>
    <location>
        <position position="151"/>
    </location>
</feature>
<feature type="sequence conflict" description="In Ref. 1; AAA32488." evidence="7" ref="1">
    <original>N</original>
    <variation>I</variation>
    <location>
        <position position="196"/>
    </location>
</feature>
<feature type="sequence conflict" description="In Ref. 1; AAA32488." evidence="7" ref="1">
    <original>A</original>
    <variation>G</variation>
    <location>
        <position position="357"/>
    </location>
</feature>
<feature type="helix" evidence="8">
    <location>
        <begin position="8"/>
        <end position="22"/>
    </location>
</feature>
<feature type="strand" evidence="8">
    <location>
        <begin position="23"/>
        <end position="25"/>
    </location>
</feature>
<feature type="strand" evidence="8">
    <location>
        <begin position="27"/>
        <end position="31"/>
    </location>
</feature>
<feature type="helix" evidence="8">
    <location>
        <begin position="38"/>
        <end position="51"/>
    </location>
</feature>
<feature type="strand" evidence="8">
    <location>
        <begin position="57"/>
        <end position="63"/>
    </location>
</feature>
<feature type="helix" evidence="8">
    <location>
        <begin position="64"/>
        <end position="74"/>
    </location>
</feature>
<feature type="strand" evidence="8">
    <location>
        <begin position="78"/>
        <end position="80"/>
    </location>
</feature>
<feature type="helix" evidence="8">
    <location>
        <begin position="81"/>
        <end position="85"/>
    </location>
</feature>
<feature type="strand" evidence="8">
    <location>
        <begin position="87"/>
        <end position="91"/>
    </location>
</feature>
<feature type="strand" evidence="8">
    <location>
        <begin position="96"/>
        <end position="100"/>
    </location>
</feature>
<feature type="strand" evidence="8">
    <location>
        <begin position="110"/>
        <end position="115"/>
    </location>
</feature>
<feature type="helix" evidence="8">
    <location>
        <begin position="117"/>
        <end position="119"/>
    </location>
</feature>
<feature type="helix" evidence="8">
    <location>
        <begin position="122"/>
        <end position="131"/>
    </location>
</feature>
<feature type="strand" evidence="8">
    <location>
        <begin position="137"/>
        <end position="142"/>
    </location>
</feature>
<feature type="helix" evidence="8">
    <location>
        <begin position="161"/>
        <end position="163"/>
    </location>
</feature>
<feature type="strand" evidence="8">
    <location>
        <begin position="168"/>
        <end position="172"/>
    </location>
</feature>
<feature type="helix" evidence="8">
    <location>
        <begin position="182"/>
        <end position="191"/>
    </location>
</feature>
<feature type="strand" evidence="8">
    <location>
        <begin position="199"/>
        <end position="201"/>
    </location>
</feature>
<feature type="strand" evidence="8">
    <location>
        <begin position="204"/>
        <end position="208"/>
    </location>
</feature>
<feature type="strand" evidence="8">
    <location>
        <begin position="211"/>
        <end position="214"/>
    </location>
</feature>
<feature type="helix" evidence="8">
    <location>
        <begin position="215"/>
        <end position="225"/>
    </location>
</feature>
<feature type="strand" evidence="8">
    <location>
        <begin position="235"/>
        <end position="241"/>
    </location>
</feature>
<feature type="helix" evidence="8">
    <location>
        <begin position="242"/>
        <end position="256"/>
    </location>
</feature>
<feature type="strand" evidence="8">
    <location>
        <begin position="268"/>
        <end position="273"/>
    </location>
</feature>
<feature type="strand" evidence="8">
    <location>
        <begin position="275"/>
        <end position="281"/>
    </location>
</feature>
<feature type="strand" evidence="8">
    <location>
        <begin position="284"/>
        <end position="291"/>
    </location>
</feature>
<feature type="strand" evidence="8">
    <location>
        <begin position="296"/>
        <end position="309"/>
    </location>
</feature>
<feature type="strand" evidence="8">
    <location>
        <begin position="318"/>
        <end position="329"/>
    </location>
</feature>
<feature type="strand" evidence="8">
    <location>
        <begin position="331"/>
        <end position="333"/>
    </location>
</feature>
<feature type="strand" evidence="8">
    <location>
        <begin position="337"/>
        <end position="342"/>
    </location>
</feature>
<feature type="helix" evidence="8">
    <location>
        <begin position="346"/>
        <end position="364"/>
    </location>
</feature>
<feature type="strand" evidence="8">
    <location>
        <begin position="368"/>
        <end position="371"/>
    </location>
</feature>
<feature type="helix" evidence="8">
    <location>
        <begin position="375"/>
        <end position="381"/>
    </location>
</feature>
<feature type="strand" evidence="8">
    <location>
        <begin position="387"/>
        <end position="394"/>
    </location>
</feature>
<feature type="helix" evidence="8">
    <location>
        <begin position="396"/>
        <end position="398"/>
    </location>
</feature>
<feature type="strand" evidence="8">
    <location>
        <begin position="403"/>
        <end position="409"/>
    </location>
</feature>
<feature type="helix" evidence="8">
    <location>
        <begin position="411"/>
        <end position="415"/>
    </location>
</feature>
<feature type="helix" evidence="8">
    <location>
        <begin position="418"/>
        <end position="431"/>
    </location>
</feature>
<feature type="strand" evidence="8">
    <location>
        <begin position="432"/>
        <end position="439"/>
    </location>
</feature>
<proteinExistence type="evidence at protein level"/>
<evidence type="ECO:0000255" key="1"/>
<evidence type="ECO:0000269" key="2">
    <source>
    </source>
</evidence>
<evidence type="ECO:0000269" key="3">
    <source>
    </source>
</evidence>
<evidence type="ECO:0000269" key="4">
    <source>
    </source>
</evidence>
<evidence type="ECO:0000269" key="5">
    <source>
    </source>
</evidence>
<evidence type="ECO:0000269" key="6">
    <source>
    </source>
</evidence>
<evidence type="ECO:0000305" key="7"/>
<evidence type="ECO:0007829" key="8">
    <source>
        <dbReference type="PDB" id="3UPU"/>
    </source>
</evidence>
<comment type="function">
    <text evidence="2 4 5 6">DNA helicase that stimulates viral DNA replication and recombination. Plays a role in T4 DNA replication initiation by selecting and activating DNA origins. Acts by dissociating and reassociating with the DNA molecule being unwound. Unwinds DNA as a monomer in a 5'-3' direction at a rate of 250 bp/s and can efficiently displace proteins from the DNA (PubMed:17823128, PubMed:22504228).</text>
</comment>
<comment type="catalytic activity">
    <reaction evidence="2 4">
        <text>Couples ATP hydrolysis with the unwinding of duplex DNA at the replication fork by translocating in the 5'-3' direction. This creates two antiparallel DNA single strands (ssDNA). The leading ssDNA polymer is the template for DNA polymerase III holoenzyme which synthesizes a continuous strand.</text>
        <dbReference type="EC" id="5.6.2.3"/>
    </reaction>
</comment>
<comment type="catalytic activity">
    <reaction evidence="3">
        <text>ATP + H2O = ADP + phosphate + H(+)</text>
        <dbReference type="Rhea" id="RHEA:13065"/>
        <dbReference type="ChEBI" id="CHEBI:15377"/>
        <dbReference type="ChEBI" id="CHEBI:15378"/>
        <dbReference type="ChEBI" id="CHEBI:30616"/>
        <dbReference type="ChEBI" id="CHEBI:43474"/>
        <dbReference type="ChEBI" id="CHEBI:456216"/>
        <dbReference type="EC" id="5.6.2.3"/>
    </reaction>
</comment>
<comment type="subunit">
    <text evidence="2 3">Monomer (PubMed:12411580). Interacts with UvsX and gene 32 protein.</text>
</comment>
<comment type="online information" name="Wikipedia">
    <link uri="https://en.wikipedia.org/wiki/Dda_%28DNA-dependent_ATPase%29"/>
    <text>Dda (DNA-dependent ATPase) entry</text>
</comment>
<gene>
    <name type="primary">dda</name>
    <name type="synonym">sud</name>
</gene>
<dbReference type="EC" id="5.6.2.3" evidence="4"/>
<dbReference type="EMBL" id="M93048">
    <property type="protein sequence ID" value="AAA32488.1"/>
    <property type="molecule type" value="Genomic_DNA"/>
</dbReference>
<dbReference type="EMBL" id="AF158101">
    <property type="protein sequence ID" value="AAD42555.1"/>
    <property type="molecule type" value="Genomic_DNA"/>
</dbReference>
<dbReference type="PIR" id="A45068">
    <property type="entry name" value="A45068"/>
</dbReference>
<dbReference type="RefSeq" id="NP_049632.1">
    <property type="nucleotide sequence ID" value="NC_000866.4"/>
</dbReference>
<dbReference type="PDB" id="3UPU">
    <property type="method" value="X-ray"/>
    <property type="resolution" value="3.30 A"/>
    <property type="chains" value="A/B/C=1-439"/>
</dbReference>
<dbReference type="PDB" id="8GME">
    <property type="method" value="X-ray"/>
    <property type="resolution" value="4.98 A"/>
    <property type="chains" value="C/D=1-439"/>
</dbReference>
<dbReference type="PDB" id="8S9I">
    <property type="method" value="X-ray"/>
    <property type="resolution" value="3.53 A"/>
    <property type="chains" value="A=1-439"/>
</dbReference>
<dbReference type="PDBsum" id="3UPU"/>
<dbReference type="PDBsum" id="8GME"/>
<dbReference type="PDBsum" id="8S9I"/>
<dbReference type="SMR" id="P32270"/>
<dbReference type="GeneID" id="1258784"/>
<dbReference type="KEGG" id="vg:1258784"/>
<dbReference type="OrthoDB" id="5394at10239"/>
<dbReference type="EvolutionaryTrace" id="P32270"/>
<dbReference type="Proteomes" id="UP000009087">
    <property type="component" value="Segment"/>
</dbReference>
<dbReference type="GO" id="GO:0005524">
    <property type="term" value="F:ATP binding"/>
    <property type="evidence" value="ECO:0007669"/>
    <property type="project" value="UniProtKB-KW"/>
</dbReference>
<dbReference type="GO" id="GO:0016887">
    <property type="term" value="F:ATP hydrolysis activity"/>
    <property type="evidence" value="ECO:0007669"/>
    <property type="project" value="InterPro"/>
</dbReference>
<dbReference type="GO" id="GO:0004386">
    <property type="term" value="F:helicase activity"/>
    <property type="evidence" value="ECO:0000314"/>
    <property type="project" value="CACAO"/>
</dbReference>
<dbReference type="GO" id="GO:0006260">
    <property type="term" value="P:DNA replication"/>
    <property type="evidence" value="ECO:0007669"/>
    <property type="project" value="UniProtKB-KW"/>
</dbReference>
<dbReference type="CDD" id="cd17933">
    <property type="entry name" value="DEXSc_RecD-like"/>
    <property type="match status" value="1"/>
</dbReference>
<dbReference type="CDD" id="cd18809">
    <property type="entry name" value="SF1_C_RecD"/>
    <property type="match status" value="1"/>
</dbReference>
<dbReference type="Gene3D" id="2.30.30.780">
    <property type="match status" value="1"/>
</dbReference>
<dbReference type="Gene3D" id="3.40.50.300">
    <property type="entry name" value="P-loop containing nucleotide triphosphate hydrolases"/>
    <property type="match status" value="2"/>
</dbReference>
<dbReference type="InterPro" id="IPR003593">
    <property type="entry name" value="AAA+_ATPase"/>
</dbReference>
<dbReference type="InterPro" id="IPR027417">
    <property type="entry name" value="P-loop_NTPase"/>
</dbReference>
<dbReference type="InterPro" id="IPR051055">
    <property type="entry name" value="PIF1_helicase"/>
</dbReference>
<dbReference type="InterPro" id="IPR041214">
    <property type="entry name" value="SH3_14"/>
</dbReference>
<dbReference type="PANTHER" id="PTHR47642">
    <property type="entry name" value="ATP-DEPENDENT DNA HELICASE"/>
    <property type="match status" value="1"/>
</dbReference>
<dbReference type="PANTHER" id="PTHR47642:SF7">
    <property type="entry name" value="ATP-DEPENDENT DNA HELICASE PIF1"/>
    <property type="match status" value="1"/>
</dbReference>
<dbReference type="Pfam" id="PF13604">
    <property type="entry name" value="AAA_30"/>
    <property type="match status" value="1"/>
</dbReference>
<dbReference type="Pfam" id="PF18343">
    <property type="entry name" value="SH3_14"/>
    <property type="match status" value="1"/>
</dbReference>
<dbReference type="SMART" id="SM00382">
    <property type="entry name" value="AAA"/>
    <property type="match status" value="1"/>
</dbReference>
<dbReference type="SUPFAM" id="SSF52540">
    <property type="entry name" value="P-loop containing nucleoside triphosphate hydrolases"/>
    <property type="match status" value="1"/>
</dbReference>
<protein>
    <recommendedName>
        <fullName>ATP-dependent DNA helicase dda</fullName>
        <ecNumber evidence="4">5.6.2.3</ecNumber>
    </recommendedName>
    <alternativeName>
        <fullName evidence="7">DNA 5'-3' helicase Dda</fullName>
    </alternativeName>
</protein>
<sequence>MTFDDLTEGQKNAFNIVMKAIKEKKHHVTINGPAGTGKTTLTKFIIEALISTGGTGIILAAPTHAAKKILSKLSGKEASTIHSILKINPVTYEENVLFEQKEVPDLAKCRVLICDEVSMYDRKLFKILLSTIPPWCTIIGIGDNKQIRPVEPGENTAYISPFFTHKDFYQCELTEVKRSNAPIIDVATDVRNGKWNYDKVVDGHGVRGFTGDTALRDFMVNYFSIVKSLDDLFENRVMAFTNKSVDKLNSIIRKKIFETDKDFIVGEIIVMQEPLFKTYKIDGKPVSEIIFNNGQLVRIIEAEYTSTFVKARGVPGEYLIRHWDLTVETYGDDEYYREKIKIISSDEELYKFNLFLAKTAETYKNWNKGGKAPWSDFWDAKSQFSKVKALPASTFHKAQGMSVDRAFIYTPCIHYADVELAQQLLYVGVTRGRYDVFYV</sequence>
<reference key="1">
    <citation type="journal article" date="1992" name="J. Biol. Chem.">
        <title>Overexpression, purification, sequence analysis, and characterization of the T4 bacteriophage dda DNA helicase.</title>
        <authorList>
            <person name="Hacker K.J."/>
            <person name="Alberts B.M."/>
        </authorList>
    </citation>
    <scope>NUCLEOTIDE SEQUENCE [GENOMIC DNA]</scope>
    <scope>PROTEIN SEQUENCE OF 1-25</scope>
    <scope>FUNCTION AS A HELICASE</scope>
    <scope>FUNCTION AS AN ATPASE</scope>
    <scope>INTERACTION WITH UVSX</scope>
</reference>
<reference key="2">
    <citation type="journal article" date="2003" name="Microbiol. Mol. Biol. Rev.">
        <title>Bacteriophage T4 genome.</title>
        <authorList>
            <person name="Miller E.S."/>
            <person name="Kutter E."/>
            <person name="Mosig G."/>
            <person name="Arisaka F."/>
            <person name="Kunisawa T."/>
            <person name="Ruger W."/>
        </authorList>
    </citation>
    <scope>NUCLEOTIDE SEQUENCE [LARGE SCALE GENOMIC DNA]</scope>
</reference>
<reference key="3">
    <citation type="journal article" date="2002" name="Proc. Natl. Acad. Sci. U.S.A.">
        <title>Pre-steady-state DNA unwinding by bacteriophage T4 Dda helicase reveals a monomeric molecular motor.</title>
        <authorList>
            <person name="Nanduri B."/>
            <person name="Byrd A.K."/>
            <person name="Eoff R.L."/>
            <person name="Tackett A.J."/>
            <person name="Raney K.D."/>
        </authorList>
    </citation>
    <scope>FUNCTION</scope>
    <scope>CATALYTIC ACTIVITY</scope>
    <scope>SUBUNIT</scope>
</reference>
<reference key="4">
    <citation type="journal article" date="2007" name="J. Biol. Chem.">
        <title>The phage T4 protein UvsW drives Holliday junction branch migration.</title>
        <authorList>
            <person name="Webb M.R."/>
            <person name="Plank J.L."/>
            <person name="Long D.T."/>
            <person name="Hsieh T.S."/>
            <person name="Kreuzer K.N."/>
        </authorList>
    </citation>
    <scope>FUNCTION AS A 5'-3' HELICASE</scope>
    <scope>CATALYTIC ACTIVITY</scope>
</reference>
<reference key="5">
    <citation type="journal article" date="2008" name="J. Mol. Biol.">
        <title>Origin activation requires both replicative and accessory helicases during T4 infection.</title>
        <authorList>
            <person name="Brister J.R."/>
        </authorList>
    </citation>
    <scope>FUNCTION IN DNA REPLICATION INITIATION</scope>
</reference>
<reference key="6">
    <citation type="journal article" date="2012" name="J. Mol. Biol.">
        <title>Dda helicase tightly couples translocation on single-stranded DNA to unwinding of duplex DNA: Dda is an optimally active helicase.</title>
        <authorList>
            <person name="Byrd A.K."/>
            <person name="Matlock D.L."/>
            <person name="Bagchi D."/>
            <person name="Aarattuthodiyil S."/>
            <person name="Harrison D."/>
            <person name="Croquette V."/>
            <person name="Raney K.D."/>
        </authorList>
    </citation>
    <scope>FUNCTION</scope>
</reference>
<reference key="7">
    <citation type="journal article" date="2012" name="Structure">
        <title>The T4 phage SF1B helicase Dda is structurally optimized to perform DNA strand separation.</title>
        <authorList>
            <person name="He X."/>
            <person name="Byrd A.K."/>
            <person name="Yun M.K."/>
            <person name="Pemble C.W."/>
            <person name="Harrison D."/>
            <person name="Yeruva L."/>
            <person name="Dahl C."/>
            <person name="Kreuzer K.N."/>
            <person name="Raney K.D."/>
            <person name="White S.W."/>
        </authorList>
    </citation>
    <scope>X-RAY CRYSTALLOGRAPHY (3.3 ANGSTROMS)</scope>
</reference>
<keyword id="KW-0002">3D-structure</keyword>
<keyword id="KW-0067">ATP-binding</keyword>
<keyword id="KW-0903">Direct protein sequencing</keyword>
<keyword id="KW-0235">DNA replication</keyword>
<keyword id="KW-0347">Helicase</keyword>
<keyword id="KW-0378">Hydrolase</keyword>
<keyword id="KW-0413">Isomerase</keyword>
<keyword id="KW-0547">Nucleotide-binding</keyword>
<keyword id="KW-1185">Reference proteome</keyword>
<accession>P32270</accession>
<accession>Q9T0W1</accession>
<organism>
    <name type="scientific">Enterobacteria phage T4</name>
    <name type="common">Bacteriophage T4</name>
    <dbReference type="NCBI Taxonomy" id="10665"/>
    <lineage>
        <taxon>Viruses</taxon>
        <taxon>Duplodnaviria</taxon>
        <taxon>Heunggongvirae</taxon>
        <taxon>Uroviricota</taxon>
        <taxon>Caudoviricetes</taxon>
        <taxon>Straboviridae</taxon>
        <taxon>Tevenvirinae</taxon>
        <taxon>Tequatrovirus</taxon>
    </lineage>
</organism>
<name>DDA_BPT4</name>
<organismHost>
    <name type="scientific">Escherichia coli</name>
    <dbReference type="NCBI Taxonomy" id="562"/>
</organismHost>